<feature type="chain" id="PRO_1000099483" description="UvrABC system protein C">
    <location>
        <begin position="1"/>
        <end position="692"/>
    </location>
</feature>
<feature type="domain" description="GIY-YIG" evidence="1">
    <location>
        <begin position="16"/>
        <end position="95"/>
    </location>
</feature>
<feature type="domain" description="UVR" evidence="1">
    <location>
        <begin position="208"/>
        <end position="243"/>
    </location>
</feature>
<feature type="region of interest" description="Disordered" evidence="2">
    <location>
        <begin position="492"/>
        <end position="511"/>
    </location>
</feature>
<evidence type="ECO:0000255" key="1">
    <source>
        <dbReference type="HAMAP-Rule" id="MF_00203"/>
    </source>
</evidence>
<evidence type="ECO:0000256" key="2">
    <source>
        <dbReference type="SAM" id="MobiDB-lite"/>
    </source>
</evidence>
<dbReference type="EMBL" id="CP000820">
    <property type="protein sequence ID" value="ABW11496.1"/>
    <property type="molecule type" value="Genomic_DNA"/>
</dbReference>
<dbReference type="RefSeq" id="WP_020459663.1">
    <property type="nucleotide sequence ID" value="NC_009921.1"/>
</dbReference>
<dbReference type="SMR" id="A8KYR0"/>
<dbReference type="STRING" id="298653.Franean1_2059"/>
<dbReference type="KEGG" id="fre:Franean1_2059"/>
<dbReference type="eggNOG" id="COG0322">
    <property type="taxonomic scope" value="Bacteria"/>
</dbReference>
<dbReference type="HOGENOM" id="CLU_014841_1_1_11"/>
<dbReference type="GO" id="GO:0005737">
    <property type="term" value="C:cytoplasm"/>
    <property type="evidence" value="ECO:0007669"/>
    <property type="project" value="UniProtKB-SubCell"/>
</dbReference>
<dbReference type="GO" id="GO:0009380">
    <property type="term" value="C:excinuclease repair complex"/>
    <property type="evidence" value="ECO:0007669"/>
    <property type="project" value="InterPro"/>
</dbReference>
<dbReference type="GO" id="GO:0003677">
    <property type="term" value="F:DNA binding"/>
    <property type="evidence" value="ECO:0007669"/>
    <property type="project" value="UniProtKB-UniRule"/>
</dbReference>
<dbReference type="GO" id="GO:0009381">
    <property type="term" value="F:excinuclease ABC activity"/>
    <property type="evidence" value="ECO:0007669"/>
    <property type="project" value="UniProtKB-UniRule"/>
</dbReference>
<dbReference type="GO" id="GO:0006289">
    <property type="term" value="P:nucleotide-excision repair"/>
    <property type="evidence" value="ECO:0007669"/>
    <property type="project" value="UniProtKB-UniRule"/>
</dbReference>
<dbReference type="GO" id="GO:0009432">
    <property type="term" value="P:SOS response"/>
    <property type="evidence" value="ECO:0007669"/>
    <property type="project" value="UniProtKB-UniRule"/>
</dbReference>
<dbReference type="CDD" id="cd10434">
    <property type="entry name" value="GIY-YIG_UvrC_Cho"/>
    <property type="match status" value="1"/>
</dbReference>
<dbReference type="FunFam" id="3.30.420.340:FF:000003">
    <property type="entry name" value="UvrABC system protein C"/>
    <property type="match status" value="1"/>
</dbReference>
<dbReference type="FunFam" id="3.40.1440.10:FF:000001">
    <property type="entry name" value="UvrABC system protein C"/>
    <property type="match status" value="1"/>
</dbReference>
<dbReference type="Gene3D" id="1.10.150.20">
    <property type="entry name" value="5' to 3' exonuclease, C-terminal subdomain"/>
    <property type="match status" value="1"/>
</dbReference>
<dbReference type="Gene3D" id="3.40.1440.10">
    <property type="entry name" value="GIY-YIG endonuclease"/>
    <property type="match status" value="1"/>
</dbReference>
<dbReference type="Gene3D" id="4.10.860.10">
    <property type="entry name" value="UVR domain"/>
    <property type="match status" value="1"/>
</dbReference>
<dbReference type="Gene3D" id="3.30.420.340">
    <property type="entry name" value="UvrC, RNAse H endonuclease domain"/>
    <property type="match status" value="1"/>
</dbReference>
<dbReference type="HAMAP" id="MF_00203">
    <property type="entry name" value="UvrC"/>
    <property type="match status" value="1"/>
</dbReference>
<dbReference type="InterPro" id="IPR000305">
    <property type="entry name" value="GIY-YIG_endonuc"/>
</dbReference>
<dbReference type="InterPro" id="IPR035901">
    <property type="entry name" value="GIY-YIG_endonuc_sf"/>
</dbReference>
<dbReference type="InterPro" id="IPR047296">
    <property type="entry name" value="GIY-YIG_UvrC_Cho"/>
</dbReference>
<dbReference type="InterPro" id="IPR003583">
    <property type="entry name" value="Hlx-hairpin-Hlx_DNA-bd_motif"/>
</dbReference>
<dbReference type="InterPro" id="IPR010994">
    <property type="entry name" value="RuvA_2-like"/>
</dbReference>
<dbReference type="InterPro" id="IPR001943">
    <property type="entry name" value="UVR_dom"/>
</dbReference>
<dbReference type="InterPro" id="IPR036876">
    <property type="entry name" value="UVR_dom_sf"/>
</dbReference>
<dbReference type="InterPro" id="IPR050066">
    <property type="entry name" value="UvrABC_protein_C"/>
</dbReference>
<dbReference type="InterPro" id="IPR004791">
    <property type="entry name" value="UvrC"/>
</dbReference>
<dbReference type="InterPro" id="IPR001162">
    <property type="entry name" value="UvrC_RNase_H_dom"/>
</dbReference>
<dbReference type="InterPro" id="IPR038476">
    <property type="entry name" value="UvrC_RNase_H_dom_sf"/>
</dbReference>
<dbReference type="NCBIfam" id="NF001824">
    <property type="entry name" value="PRK00558.1-5"/>
    <property type="match status" value="1"/>
</dbReference>
<dbReference type="PANTHER" id="PTHR30562:SF1">
    <property type="entry name" value="UVRABC SYSTEM PROTEIN C"/>
    <property type="match status" value="1"/>
</dbReference>
<dbReference type="PANTHER" id="PTHR30562">
    <property type="entry name" value="UVRC/OXIDOREDUCTASE"/>
    <property type="match status" value="1"/>
</dbReference>
<dbReference type="Pfam" id="PF01541">
    <property type="entry name" value="GIY-YIG"/>
    <property type="match status" value="1"/>
</dbReference>
<dbReference type="Pfam" id="PF14520">
    <property type="entry name" value="HHH_5"/>
    <property type="match status" value="1"/>
</dbReference>
<dbReference type="Pfam" id="PF02151">
    <property type="entry name" value="UVR"/>
    <property type="match status" value="1"/>
</dbReference>
<dbReference type="Pfam" id="PF22920">
    <property type="entry name" value="UvrC_RNaseH"/>
    <property type="match status" value="1"/>
</dbReference>
<dbReference type="Pfam" id="PF08459">
    <property type="entry name" value="UvrC_RNaseH_dom"/>
    <property type="match status" value="1"/>
</dbReference>
<dbReference type="SMART" id="SM00465">
    <property type="entry name" value="GIYc"/>
    <property type="match status" value="1"/>
</dbReference>
<dbReference type="SMART" id="SM00278">
    <property type="entry name" value="HhH1"/>
    <property type="match status" value="2"/>
</dbReference>
<dbReference type="SUPFAM" id="SSF46600">
    <property type="entry name" value="C-terminal UvrC-binding domain of UvrB"/>
    <property type="match status" value="1"/>
</dbReference>
<dbReference type="SUPFAM" id="SSF82771">
    <property type="entry name" value="GIY-YIG endonuclease"/>
    <property type="match status" value="1"/>
</dbReference>
<dbReference type="SUPFAM" id="SSF47781">
    <property type="entry name" value="RuvA domain 2-like"/>
    <property type="match status" value="1"/>
</dbReference>
<dbReference type="PROSITE" id="PS50164">
    <property type="entry name" value="GIY_YIG"/>
    <property type="match status" value="1"/>
</dbReference>
<dbReference type="PROSITE" id="PS50151">
    <property type="entry name" value="UVR"/>
    <property type="match status" value="1"/>
</dbReference>
<dbReference type="PROSITE" id="PS50165">
    <property type="entry name" value="UVRC"/>
    <property type="match status" value="1"/>
</dbReference>
<organism>
    <name type="scientific">Parafrankia sp. (strain EAN1pec)</name>
    <dbReference type="NCBI Taxonomy" id="298653"/>
    <lineage>
        <taxon>Bacteria</taxon>
        <taxon>Bacillati</taxon>
        <taxon>Actinomycetota</taxon>
        <taxon>Actinomycetes</taxon>
        <taxon>Frankiales</taxon>
        <taxon>Frankiaceae</taxon>
        <taxon>Parafrankia</taxon>
    </lineage>
</organism>
<gene>
    <name evidence="1" type="primary">uvrC</name>
    <name type="ordered locus">Franean1_2059</name>
</gene>
<reference key="1">
    <citation type="journal article" date="2007" name="Genome Res.">
        <title>Genome characteristics of facultatively symbiotic Frankia sp. strains reflect host range and host plant biogeography.</title>
        <authorList>
            <person name="Normand P."/>
            <person name="Lapierre P."/>
            <person name="Tisa L.S."/>
            <person name="Gogarten J.P."/>
            <person name="Alloisio N."/>
            <person name="Bagnarol E."/>
            <person name="Bassi C.A."/>
            <person name="Berry A.M."/>
            <person name="Bickhart D.M."/>
            <person name="Choisne N."/>
            <person name="Couloux A."/>
            <person name="Cournoyer B."/>
            <person name="Cruveiller S."/>
            <person name="Daubin V."/>
            <person name="Demange N."/>
            <person name="Francino M.P."/>
            <person name="Goltsman E."/>
            <person name="Huang Y."/>
            <person name="Kopp O.R."/>
            <person name="Labarre L."/>
            <person name="Lapidus A."/>
            <person name="Lavire C."/>
            <person name="Marechal J."/>
            <person name="Martinez M."/>
            <person name="Mastronunzio J.E."/>
            <person name="Mullin B.C."/>
            <person name="Niemann J."/>
            <person name="Pujic P."/>
            <person name="Rawnsley T."/>
            <person name="Rouy Z."/>
            <person name="Schenowitz C."/>
            <person name="Sellstedt A."/>
            <person name="Tavares F."/>
            <person name="Tomkins J.P."/>
            <person name="Vallenet D."/>
            <person name="Valverde C."/>
            <person name="Wall L.G."/>
            <person name="Wang Y."/>
            <person name="Medigue C."/>
            <person name="Benson D.R."/>
        </authorList>
    </citation>
    <scope>NUCLEOTIDE SEQUENCE [LARGE SCALE GENOMIC DNA]</scope>
    <source>
        <strain>EAN1pec</strain>
    </source>
</reference>
<name>UVRC_PARS2</name>
<protein>
    <recommendedName>
        <fullName evidence="1">UvrABC system protein C</fullName>
        <shortName evidence="1">Protein UvrC</shortName>
    </recommendedName>
    <alternativeName>
        <fullName evidence="1">Excinuclease ABC subunit C</fullName>
    </alternativeName>
</protein>
<sequence>MADPASYRPPPGSIPETPGVYRFRDEHGRVIYVGKAKSLRARLANYFADIHTLHPRTQHMVTTAGSVEWTVVSTEVEALQLEYTWIKEFDPRFNVRYRDDKSYPSLAVTLYEEFPRLQVMRGPKRRGVRYFGPYAHAWAIRETLDLLLRVFPARTCSSGVFKRAGQVGRPCLLGYIDRCSAPCVGRVDADAHRQIVDDFCDFMSGQTGRYLRRLEREMRAAAEAQEYERAARLRDDIGALRRAVEKQAVVLPDGTDADVIAFAQDELEAAVQIFYVRGGRVRGQRGWVVDKLEDVTTADLVEQFLTQEYLDGVRPAGTAGTADTADTADTADPAPAAQIPREILVPELPPDAEAVAELLERARGARVDLRVPRRGDKRTLMETVERNAKQAFTLHRTKRAGDLTARSRALADLQEALELPDAPLRIECFDVSNTQGTDVVASMVVFEDGLPRKSEYRRFSIRGVDGQDDVASMRETVHRRFSRYLAERARTGELEEYPGAPTGDDEAPETGRPRRFAYPPNLVVVDGGPPQVAAAARALDELGIESGPGGVALCGLAKRLEEVWLPDQDEPVILPRTSEALYLLQRVRDEAHRFAITYHRQKRSTSMVASALDDVPGLGETRRKALLRHFGSVAKVRAAGAEEIAQVPGIGPRTAEAIVAALARSAPGTDAAPAPAVDPLTGEIIDSAGVTR</sequence>
<proteinExistence type="inferred from homology"/>
<comment type="function">
    <text evidence="1">The UvrABC repair system catalyzes the recognition and processing of DNA lesions. UvrC both incises the 5' and 3' sides of the lesion. The N-terminal half is responsible for the 3' incision and the C-terminal half is responsible for the 5' incision.</text>
</comment>
<comment type="subunit">
    <text evidence="1">Interacts with UvrB in an incision complex.</text>
</comment>
<comment type="subcellular location">
    <subcellularLocation>
        <location evidence="1">Cytoplasm</location>
    </subcellularLocation>
</comment>
<comment type="similarity">
    <text evidence="1">Belongs to the UvrC family.</text>
</comment>
<accession>A8KYR0</accession>
<keyword id="KW-0963">Cytoplasm</keyword>
<keyword id="KW-0227">DNA damage</keyword>
<keyword id="KW-0228">DNA excision</keyword>
<keyword id="KW-0234">DNA repair</keyword>
<keyword id="KW-0267">Excision nuclease</keyword>
<keyword id="KW-0742">SOS response</keyword>